<name>Y1219_BACC2</name>
<reference key="1">
    <citation type="submission" date="2008-10" db="EMBL/GenBank/DDBJ databases">
        <title>Genome sequence of Bacillus cereus G9842.</title>
        <authorList>
            <person name="Dodson R.J."/>
            <person name="Durkin A.S."/>
            <person name="Rosovitz M.J."/>
            <person name="Rasko D.A."/>
            <person name="Hoffmaster A."/>
            <person name="Ravel J."/>
            <person name="Sutton G."/>
        </authorList>
    </citation>
    <scope>NUCLEOTIDE SEQUENCE [LARGE SCALE GENOMIC DNA]</scope>
    <source>
        <strain>G9842</strain>
    </source>
</reference>
<keyword id="KW-0012">Acyltransferase</keyword>
<keyword id="KW-0808">Transferase</keyword>
<proteinExistence type="inferred from homology"/>
<accession>B7IVF6</accession>
<evidence type="ECO:0000255" key="1">
    <source>
        <dbReference type="HAMAP-Rule" id="MF_00824"/>
    </source>
</evidence>
<dbReference type="EC" id="2.3.1.-" evidence="1"/>
<dbReference type="EMBL" id="CP001186">
    <property type="protein sequence ID" value="ACK95892.1"/>
    <property type="molecule type" value="Genomic_DNA"/>
</dbReference>
<dbReference type="RefSeq" id="WP_000506698.1">
    <property type="nucleotide sequence ID" value="NC_011772.1"/>
</dbReference>
<dbReference type="SMR" id="B7IVF6"/>
<dbReference type="KEGG" id="bcg:BCG9842_B1219"/>
<dbReference type="HOGENOM" id="CLU_136634_0_0_9"/>
<dbReference type="Proteomes" id="UP000006744">
    <property type="component" value="Chromosome"/>
</dbReference>
<dbReference type="GO" id="GO:0016747">
    <property type="term" value="F:acyltransferase activity, transferring groups other than amino-acyl groups"/>
    <property type="evidence" value="ECO:0007669"/>
    <property type="project" value="UniProtKB-UniRule"/>
</dbReference>
<dbReference type="CDD" id="cd04301">
    <property type="entry name" value="NAT_SF"/>
    <property type="match status" value="1"/>
</dbReference>
<dbReference type="Gene3D" id="3.40.630.30">
    <property type="match status" value="1"/>
</dbReference>
<dbReference type="HAMAP" id="MF_00824">
    <property type="entry name" value="Acetyltransf_YlbP"/>
    <property type="match status" value="1"/>
</dbReference>
<dbReference type="InterPro" id="IPR016181">
    <property type="entry name" value="Acyl_CoA_acyltransferase"/>
</dbReference>
<dbReference type="InterPro" id="IPR000182">
    <property type="entry name" value="GNAT_dom"/>
</dbReference>
<dbReference type="InterPro" id="IPR017274">
    <property type="entry name" value="YlbP"/>
</dbReference>
<dbReference type="NCBIfam" id="NF010241">
    <property type="entry name" value="PRK13688.1"/>
    <property type="match status" value="1"/>
</dbReference>
<dbReference type="Pfam" id="PF00583">
    <property type="entry name" value="Acetyltransf_1"/>
    <property type="match status" value="1"/>
</dbReference>
<dbReference type="PIRSF" id="PIRSF037732">
    <property type="entry name" value="YlbP_prd"/>
    <property type="match status" value="1"/>
</dbReference>
<dbReference type="SUPFAM" id="SSF55729">
    <property type="entry name" value="Acyl-CoA N-acyltransferases (Nat)"/>
    <property type="match status" value="1"/>
</dbReference>
<protein>
    <recommendedName>
        <fullName evidence="1">Uncharacterized N-acetyltransferase BCG9842_B1219</fullName>
        <ecNumber evidence="1">2.3.1.-</ecNumber>
    </recommendedName>
</protein>
<gene>
    <name type="ordered locus">BCG9842_B1219</name>
</gene>
<feature type="chain" id="PRO_1000191223" description="Uncharacterized N-acetyltransferase BCG9842_B1219">
    <location>
        <begin position="1"/>
        <end position="157"/>
    </location>
</feature>
<feature type="domain" description="N-acetyltransferase" evidence="1">
    <location>
        <begin position="9"/>
        <end position="154"/>
    </location>
</feature>
<sequence length="157" mass="17977">MGFPKVERLLINYKTLDEFKKFKGCGAQELSMLEELQANIIENDSESPFYGIYYGGSLIARMSLYMKRNGGEPFEITGPYLELYKLEVLPTFQKQGFGQMLVNHAKQMQFPIKTIARIHSSGFWDKLSFNPVSVTDGDFYIWHPETNLNAVTNEESA</sequence>
<organism>
    <name type="scientific">Bacillus cereus (strain G9842)</name>
    <dbReference type="NCBI Taxonomy" id="405531"/>
    <lineage>
        <taxon>Bacteria</taxon>
        <taxon>Bacillati</taxon>
        <taxon>Bacillota</taxon>
        <taxon>Bacilli</taxon>
        <taxon>Bacillales</taxon>
        <taxon>Bacillaceae</taxon>
        <taxon>Bacillus</taxon>
        <taxon>Bacillus cereus group</taxon>
    </lineage>
</organism>